<name>ISAM1_ARATH</name>
<keyword id="KW-0025">Alternative splicing</keyword>
<keyword id="KW-0408">Iron</keyword>
<keyword id="KW-0411">Iron-sulfur</keyword>
<keyword id="KW-0479">Metal-binding</keyword>
<keyword id="KW-0496">Mitochondrion</keyword>
<keyword id="KW-1185">Reference proteome</keyword>
<keyword id="KW-0809">Transit peptide</keyword>
<feature type="transit peptide" description="Mitochondrion" evidence="3">
    <location>
        <begin position="1"/>
        <end position="33"/>
    </location>
</feature>
<feature type="chain" id="PRO_0000223684" description="Iron-sulfur assembly protein IscA-like 1, mitochondrial">
    <location>
        <begin position="34"/>
        <end position="137"/>
    </location>
</feature>
<feature type="binding site" evidence="2">
    <location>
        <position position="54"/>
    </location>
    <ligand>
        <name>Fe cation</name>
        <dbReference type="ChEBI" id="CHEBI:24875"/>
    </ligand>
</feature>
<feature type="binding site" evidence="2">
    <location>
        <position position="118"/>
    </location>
    <ligand>
        <name>Fe cation</name>
        <dbReference type="ChEBI" id="CHEBI:24875"/>
    </ligand>
</feature>
<feature type="binding site" evidence="2">
    <location>
        <position position="120"/>
    </location>
    <ligand>
        <name>Fe cation</name>
        <dbReference type="ChEBI" id="CHEBI:24875"/>
    </ligand>
</feature>
<feature type="sequence conflict" description="In Ref. 4; AAM64677." evidence="4" ref="4">
    <original>I</original>
    <variation>V</variation>
    <location>
        <position position="6"/>
    </location>
</feature>
<reference key="1">
    <citation type="journal article" date="1999" name="Nature">
        <title>Sequence and analysis of chromosome 2 of the plant Arabidopsis thaliana.</title>
        <authorList>
            <person name="Lin X."/>
            <person name="Kaul S."/>
            <person name="Rounsley S.D."/>
            <person name="Shea T.P."/>
            <person name="Benito M.-I."/>
            <person name="Town C.D."/>
            <person name="Fujii C.Y."/>
            <person name="Mason T.M."/>
            <person name="Bowman C.L."/>
            <person name="Barnstead M.E."/>
            <person name="Feldblyum T.V."/>
            <person name="Buell C.R."/>
            <person name="Ketchum K.A."/>
            <person name="Lee J.J."/>
            <person name="Ronning C.M."/>
            <person name="Koo H.L."/>
            <person name="Moffat K.S."/>
            <person name="Cronin L.A."/>
            <person name="Shen M."/>
            <person name="Pai G."/>
            <person name="Van Aken S."/>
            <person name="Umayam L."/>
            <person name="Tallon L.J."/>
            <person name="Gill J.E."/>
            <person name="Adams M.D."/>
            <person name="Carrera A.J."/>
            <person name="Creasy T.H."/>
            <person name="Goodman H.M."/>
            <person name="Somerville C.R."/>
            <person name="Copenhaver G.P."/>
            <person name="Preuss D."/>
            <person name="Nierman W.C."/>
            <person name="White O."/>
            <person name="Eisen J.A."/>
            <person name="Salzberg S.L."/>
            <person name="Fraser C.M."/>
            <person name="Venter J.C."/>
        </authorList>
    </citation>
    <scope>NUCLEOTIDE SEQUENCE [LARGE SCALE GENOMIC DNA]</scope>
    <source>
        <strain>cv. Columbia</strain>
    </source>
</reference>
<reference key="2">
    <citation type="journal article" date="2017" name="Plant J.">
        <title>Araport11: a complete reannotation of the Arabidopsis thaliana reference genome.</title>
        <authorList>
            <person name="Cheng C.Y."/>
            <person name="Krishnakumar V."/>
            <person name="Chan A.P."/>
            <person name="Thibaud-Nissen F."/>
            <person name="Schobel S."/>
            <person name="Town C.D."/>
        </authorList>
    </citation>
    <scope>GENOME REANNOTATION</scope>
    <source>
        <strain>cv. Columbia</strain>
    </source>
</reference>
<reference key="3">
    <citation type="journal article" date="2003" name="Science">
        <title>Empirical analysis of transcriptional activity in the Arabidopsis genome.</title>
        <authorList>
            <person name="Yamada K."/>
            <person name="Lim J."/>
            <person name="Dale J.M."/>
            <person name="Chen H."/>
            <person name="Shinn P."/>
            <person name="Palm C.J."/>
            <person name="Southwick A.M."/>
            <person name="Wu H.C."/>
            <person name="Kim C.J."/>
            <person name="Nguyen M."/>
            <person name="Pham P.K."/>
            <person name="Cheuk R.F."/>
            <person name="Karlin-Newmann G."/>
            <person name="Liu S.X."/>
            <person name="Lam B."/>
            <person name="Sakano H."/>
            <person name="Wu T."/>
            <person name="Yu G."/>
            <person name="Miranda M."/>
            <person name="Quach H.L."/>
            <person name="Tripp M."/>
            <person name="Chang C.H."/>
            <person name="Lee J.M."/>
            <person name="Toriumi M.J."/>
            <person name="Chan M.M."/>
            <person name="Tang C.C."/>
            <person name="Onodera C.S."/>
            <person name="Deng J.M."/>
            <person name="Akiyama K."/>
            <person name="Ansari Y."/>
            <person name="Arakawa T."/>
            <person name="Banh J."/>
            <person name="Banno F."/>
            <person name="Bowser L."/>
            <person name="Brooks S.Y."/>
            <person name="Carninci P."/>
            <person name="Chao Q."/>
            <person name="Choy N."/>
            <person name="Enju A."/>
            <person name="Goldsmith A.D."/>
            <person name="Gurjal M."/>
            <person name="Hansen N.F."/>
            <person name="Hayashizaki Y."/>
            <person name="Johnson-Hopson C."/>
            <person name="Hsuan V.W."/>
            <person name="Iida K."/>
            <person name="Karnes M."/>
            <person name="Khan S."/>
            <person name="Koesema E."/>
            <person name="Ishida J."/>
            <person name="Jiang P.X."/>
            <person name="Jones T."/>
            <person name="Kawai J."/>
            <person name="Kamiya A."/>
            <person name="Meyers C."/>
            <person name="Nakajima M."/>
            <person name="Narusaka M."/>
            <person name="Seki M."/>
            <person name="Sakurai T."/>
            <person name="Satou M."/>
            <person name="Tamse R."/>
            <person name="Vaysberg M."/>
            <person name="Wallender E.K."/>
            <person name="Wong C."/>
            <person name="Yamamura Y."/>
            <person name="Yuan S."/>
            <person name="Shinozaki K."/>
            <person name="Davis R.W."/>
            <person name="Theologis A."/>
            <person name="Ecker J.R."/>
        </authorList>
    </citation>
    <scope>NUCLEOTIDE SEQUENCE [LARGE SCALE MRNA]</scope>
    <source>
        <strain>cv. Columbia</strain>
    </source>
</reference>
<reference key="4">
    <citation type="submission" date="2002-03" db="EMBL/GenBank/DDBJ databases">
        <title>Full-length cDNA from Arabidopsis thaliana.</title>
        <authorList>
            <person name="Brover V.V."/>
            <person name="Troukhan M.E."/>
            <person name="Alexandrov N.A."/>
            <person name="Lu Y.-P."/>
            <person name="Flavell R.B."/>
            <person name="Feldmann K.A."/>
        </authorList>
    </citation>
    <scope>NUCLEOTIDE SEQUENCE [LARGE SCALE MRNA]</scope>
</reference>
<reference key="5">
    <citation type="journal article" date="2005" name="Plant Physiol.">
        <title>Iron-sulfur cluster biogenesis in chloroplasts. Involvement of the scaffold protein CpIscA.</title>
        <authorList>
            <person name="Abdel-Ghany S.E."/>
            <person name="Ye H."/>
            <person name="Garifullina G.F."/>
            <person name="Zhang L."/>
            <person name="Pilon-Smits E.A.H."/>
            <person name="Pilon M."/>
        </authorList>
    </citation>
    <scope>IDENTIFICATION</scope>
</reference>
<evidence type="ECO:0000250" key="1"/>
<evidence type="ECO:0000250" key="2">
    <source>
        <dbReference type="UniProtKB" id="P0AAC8"/>
    </source>
</evidence>
<evidence type="ECO:0000255" key="3"/>
<evidence type="ECO:0000305" key="4"/>
<comment type="function">
    <text evidence="1">Involved in the assembly of mitochondrial iron-sulfur proteins. Probably involved in the binding of an intermediate of Fe/S cluster assembly (By similarity).</text>
</comment>
<comment type="cofactor">
    <cofactor evidence="1">
        <name>Fe cation</name>
        <dbReference type="ChEBI" id="CHEBI:24875"/>
    </cofactor>
    <text evidence="1">Binds 2 iron ions per dimer. The dimer may bind additional iron ions.</text>
</comment>
<comment type="subunit">
    <text evidence="1">Homodimer; may form tetramers and higher multimers.</text>
</comment>
<comment type="subcellular location">
    <subcellularLocation>
        <location evidence="4">Mitochondrion</location>
    </subcellularLocation>
</comment>
<comment type="alternative products">
    <event type="alternative splicing"/>
    <isoform>
        <id>Q8LBM4-1</id>
        <name>1</name>
        <sequence type="displayed"/>
    </isoform>
    <text>A number of isoforms are produced. According to EST sequences.</text>
</comment>
<comment type="similarity">
    <text evidence="4">Belongs to the HesB/IscA family.</text>
</comment>
<accession>Q8LBM4</accession>
<accession>Q9SLE6</accession>
<organism>
    <name type="scientific">Arabidopsis thaliana</name>
    <name type="common">Mouse-ear cress</name>
    <dbReference type="NCBI Taxonomy" id="3702"/>
    <lineage>
        <taxon>Eukaryota</taxon>
        <taxon>Viridiplantae</taxon>
        <taxon>Streptophyta</taxon>
        <taxon>Embryophyta</taxon>
        <taxon>Tracheophyta</taxon>
        <taxon>Spermatophyta</taxon>
        <taxon>Magnoliopsida</taxon>
        <taxon>eudicotyledons</taxon>
        <taxon>Gunneridae</taxon>
        <taxon>Pentapetalae</taxon>
        <taxon>rosids</taxon>
        <taxon>malvids</taxon>
        <taxon>Brassicales</taxon>
        <taxon>Brassicaceae</taxon>
        <taxon>Camelineae</taxon>
        <taxon>Arabidopsis</taxon>
    </lineage>
</organism>
<sequence>MKASQILAAAAARVGPALRKQVLTLTDEAASRVHHLLQQRQKPFLRLGVKARGCNGLSYTLNYADEKGKFDELVEEKGVRILVEPKALMHVIGTKMDFVDDKLRSEFVFINPNSQGQCGCGESFMTTSTSSAKQSAS</sequence>
<proteinExistence type="evidence at transcript level"/>
<protein>
    <recommendedName>
        <fullName>Iron-sulfur assembly protein IscA-like 1, mitochondrial</fullName>
    </recommendedName>
</protein>
<dbReference type="EMBL" id="AC005825">
    <property type="protein sequence ID" value="AAD24604.1"/>
    <property type="molecule type" value="Genomic_DNA"/>
</dbReference>
<dbReference type="EMBL" id="CP002685">
    <property type="protein sequence ID" value="AEC06528.1"/>
    <property type="molecule type" value="Genomic_DNA"/>
</dbReference>
<dbReference type="EMBL" id="BT004789">
    <property type="protein sequence ID" value="AAO44055.1"/>
    <property type="molecule type" value="mRNA"/>
</dbReference>
<dbReference type="EMBL" id="AY087119">
    <property type="protein sequence ID" value="AAM64677.1"/>
    <property type="molecule type" value="mRNA"/>
</dbReference>
<dbReference type="PIR" id="C84543">
    <property type="entry name" value="C84543"/>
</dbReference>
<dbReference type="RefSeq" id="NP_179262.1">
    <molecule id="Q8LBM4-1"/>
    <property type="nucleotide sequence ID" value="NM_127223.5"/>
</dbReference>
<dbReference type="SMR" id="Q8LBM4"/>
<dbReference type="BioGRID" id="1529">
    <property type="interactions" value="2"/>
</dbReference>
<dbReference type="FunCoup" id="Q8LBM4">
    <property type="interactions" value="1916"/>
</dbReference>
<dbReference type="IntAct" id="Q8LBM4">
    <property type="interactions" value="2"/>
</dbReference>
<dbReference type="STRING" id="3702.Q8LBM4"/>
<dbReference type="SwissPalm" id="Q8LBM4"/>
<dbReference type="PaxDb" id="3702-AT2G16710.3"/>
<dbReference type="ProteomicsDB" id="247296">
    <molecule id="Q8LBM4-1"/>
</dbReference>
<dbReference type="EnsemblPlants" id="AT2G16710.1">
    <molecule id="Q8LBM4-1"/>
    <property type="protein sequence ID" value="AT2G16710.1"/>
    <property type="gene ID" value="AT2G16710"/>
</dbReference>
<dbReference type="GeneID" id="816172"/>
<dbReference type="Gramene" id="AT2G16710.1">
    <molecule id="Q8LBM4-1"/>
    <property type="protein sequence ID" value="AT2G16710.1"/>
    <property type="gene ID" value="AT2G16710"/>
</dbReference>
<dbReference type="KEGG" id="ath:AT2G16710"/>
<dbReference type="Araport" id="AT2G16710"/>
<dbReference type="TAIR" id="AT2G16710"/>
<dbReference type="eggNOG" id="KOG1120">
    <property type="taxonomic scope" value="Eukaryota"/>
</dbReference>
<dbReference type="HOGENOM" id="CLU_069054_4_1_1"/>
<dbReference type="InParanoid" id="Q8LBM4"/>
<dbReference type="PhylomeDB" id="Q8LBM4"/>
<dbReference type="PRO" id="PR:Q8LBM4"/>
<dbReference type="Proteomes" id="UP000006548">
    <property type="component" value="Chromosome 2"/>
</dbReference>
<dbReference type="ExpressionAtlas" id="Q8LBM4">
    <property type="expression patterns" value="baseline and differential"/>
</dbReference>
<dbReference type="GO" id="GO:0005739">
    <property type="term" value="C:mitochondrion"/>
    <property type="evidence" value="ECO:0007669"/>
    <property type="project" value="UniProtKB-SubCell"/>
</dbReference>
<dbReference type="GO" id="GO:0051536">
    <property type="term" value="F:iron-sulfur cluster binding"/>
    <property type="evidence" value="ECO:0007669"/>
    <property type="project" value="UniProtKB-KW"/>
</dbReference>
<dbReference type="GO" id="GO:0046872">
    <property type="term" value="F:metal ion binding"/>
    <property type="evidence" value="ECO:0007669"/>
    <property type="project" value="UniProtKB-KW"/>
</dbReference>
<dbReference type="GO" id="GO:0016226">
    <property type="term" value="P:iron-sulfur cluster assembly"/>
    <property type="evidence" value="ECO:0007669"/>
    <property type="project" value="InterPro"/>
</dbReference>
<dbReference type="FunFam" id="2.60.300.12:FF:000001">
    <property type="entry name" value="Iron-binding protein IscA"/>
    <property type="match status" value="1"/>
</dbReference>
<dbReference type="Gene3D" id="2.60.300.12">
    <property type="entry name" value="HesB-like domain"/>
    <property type="match status" value="1"/>
</dbReference>
<dbReference type="InterPro" id="IPR050322">
    <property type="entry name" value="Fe-S_cluster_asmbl/transfer"/>
</dbReference>
<dbReference type="InterPro" id="IPR000361">
    <property type="entry name" value="FeS_biogenesis"/>
</dbReference>
<dbReference type="InterPro" id="IPR016092">
    <property type="entry name" value="FeS_cluster_insertion"/>
</dbReference>
<dbReference type="InterPro" id="IPR017870">
    <property type="entry name" value="FeS_cluster_insertion_CS"/>
</dbReference>
<dbReference type="InterPro" id="IPR035903">
    <property type="entry name" value="HesB-like_dom_sf"/>
</dbReference>
<dbReference type="NCBIfam" id="TIGR00049">
    <property type="entry name" value="iron-sulfur cluster assembly accessory protein"/>
    <property type="match status" value="1"/>
</dbReference>
<dbReference type="PANTHER" id="PTHR10072:SF41">
    <property type="entry name" value="IRON-SULFUR CLUSTER ASSEMBLY 1 HOMOLOG, MITOCHONDRIAL"/>
    <property type="match status" value="1"/>
</dbReference>
<dbReference type="PANTHER" id="PTHR10072">
    <property type="entry name" value="IRON-SULFUR CLUSTER ASSEMBLY PROTEIN"/>
    <property type="match status" value="1"/>
</dbReference>
<dbReference type="Pfam" id="PF01521">
    <property type="entry name" value="Fe-S_biosyn"/>
    <property type="match status" value="1"/>
</dbReference>
<dbReference type="SUPFAM" id="SSF89360">
    <property type="entry name" value="HesB-like domain"/>
    <property type="match status" value="1"/>
</dbReference>
<dbReference type="PROSITE" id="PS01152">
    <property type="entry name" value="HESB"/>
    <property type="match status" value="1"/>
</dbReference>
<gene>
    <name type="ordered locus">At2g16710</name>
    <name type="ORF">T24I21.12</name>
</gene>